<accession>A9R6N5</accession>
<name>STHA_YERPG</name>
<sequence>MQQHFHFDAIVIGSGPGGEGAAMGLVKQGARVAVIERYNNVGGGCTHWGTIPSKALRHAVSRIIEFNQNPLYSDNARTIKSSFADILNHADRVINQQTRMRQGFYDRNHCHMFSGDASFIDANTVNVRYADGTSDTLQADNIVIATGSRPYRPVNVDFNHERIYDSDTILQLSHEPQHVIIYGAGVIGCEYASIFRGLSVKVDLINTRDRLLAFLDQEMSDALSYHFWNNGVVIRHNEEFEQIEGTTDGVIVHLKSGKKVKADCLLYANGRTGNTSGLGLENIGLEADSRGLLKVNSMYQTALSHVYAVGDVIGYPSLASAAYDQGRIAAQAMIKGEANVHLIEDIPTGIYTIPEISSVGKTEQELTAMKVPYEVGRAQFKHLARAQIVGMDTGSLKILFHRETKQILGIHCFGERAAEIIHIGQAIMEQKGEGNTLEYFVNTTFNYPTMAEAYRVAALNGLNRLF</sequence>
<protein>
    <recommendedName>
        <fullName evidence="1">Soluble pyridine nucleotide transhydrogenase</fullName>
        <shortName evidence="1">STH</shortName>
        <ecNumber evidence="1">1.6.1.1</ecNumber>
    </recommendedName>
    <alternativeName>
        <fullName evidence="1">NAD(P)(+) transhydrogenase [B-specific]</fullName>
    </alternativeName>
</protein>
<gene>
    <name evidence="1" type="primary">sthA</name>
    <name evidence="1" type="synonym">udhA</name>
    <name type="ordered locus">YpAngola_A0118</name>
</gene>
<dbReference type="EC" id="1.6.1.1" evidence="1"/>
<dbReference type="EMBL" id="CP000901">
    <property type="protein sequence ID" value="ABX87424.1"/>
    <property type="molecule type" value="Genomic_DNA"/>
</dbReference>
<dbReference type="RefSeq" id="WP_002209477.1">
    <property type="nucleotide sequence ID" value="NZ_CP009935.1"/>
</dbReference>
<dbReference type="SMR" id="A9R6N5"/>
<dbReference type="GeneID" id="96663600"/>
<dbReference type="KEGG" id="ypg:YpAngola_A0118"/>
<dbReference type="PATRIC" id="fig|349746.12.peg.1063"/>
<dbReference type="GO" id="GO:0005829">
    <property type="term" value="C:cytosol"/>
    <property type="evidence" value="ECO:0007669"/>
    <property type="project" value="TreeGrafter"/>
</dbReference>
<dbReference type="GO" id="GO:0004148">
    <property type="term" value="F:dihydrolipoyl dehydrogenase (NADH) activity"/>
    <property type="evidence" value="ECO:0007669"/>
    <property type="project" value="TreeGrafter"/>
</dbReference>
<dbReference type="GO" id="GO:0050660">
    <property type="term" value="F:flavin adenine dinucleotide binding"/>
    <property type="evidence" value="ECO:0007669"/>
    <property type="project" value="TreeGrafter"/>
</dbReference>
<dbReference type="GO" id="GO:0003957">
    <property type="term" value="F:NAD(P)+ transhydrogenase (Si-specific) activity"/>
    <property type="evidence" value="ECO:0007669"/>
    <property type="project" value="UniProtKB-UniRule"/>
</dbReference>
<dbReference type="GO" id="GO:0006103">
    <property type="term" value="P:2-oxoglutarate metabolic process"/>
    <property type="evidence" value="ECO:0007669"/>
    <property type="project" value="TreeGrafter"/>
</dbReference>
<dbReference type="GO" id="GO:0006739">
    <property type="term" value="P:NADP metabolic process"/>
    <property type="evidence" value="ECO:0007669"/>
    <property type="project" value="UniProtKB-UniRule"/>
</dbReference>
<dbReference type="FunFam" id="3.30.390.30:FF:000002">
    <property type="entry name" value="Soluble pyridine nucleotide transhydrogenase"/>
    <property type="match status" value="1"/>
</dbReference>
<dbReference type="FunFam" id="3.50.50.60:FF:000008">
    <property type="entry name" value="Soluble pyridine nucleotide transhydrogenase"/>
    <property type="match status" value="1"/>
</dbReference>
<dbReference type="Gene3D" id="3.30.390.30">
    <property type="match status" value="1"/>
</dbReference>
<dbReference type="Gene3D" id="3.50.50.60">
    <property type="entry name" value="FAD/NAD(P)-binding domain"/>
    <property type="match status" value="2"/>
</dbReference>
<dbReference type="HAMAP" id="MF_00247">
    <property type="entry name" value="SthA"/>
    <property type="match status" value="1"/>
</dbReference>
<dbReference type="InterPro" id="IPR050151">
    <property type="entry name" value="Class-I_Pyr_Nuc-Dis_Oxidored"/>
</dbReference>
<dbReference type="InterPro" id="IPR036188">
    <property type="entry name" value="FAD/NAD-bd_sf"/>
</dbReference>
<dbReference type="InterPro" id="IPR023753">
    <property type="entry name" value="FAD/NAD-binding_dom"/>
</dbReference>
<dbReference type="InterPro" id="IPR016156">
    <property type="entry name" value="FAD/NAD-linked_Rdtase_dimer_sf"/>
</dbReference>
<dbReference type="InterPro" id="IPR001100">
    <property type="entry name" value="Pyr_nuc-diS_OxRdtase"/>
</dbReference>
<dbReference type="InterPro" id="IPR004099">
    <property type="entry name" value="Pyr_nucl-diS_OxRdtase_dimer"/>
</dbReference>
<dbReference type="InterPro" id="IPR022962">
    <property type="entry name" value="STH_gammaproteobact"/>
</dbReference>
<dbReference type="NCBIfam" id="NF003585">
    <property type="entry name" value="PRK05249.1"/>
    <property type="match status" value="1"/>
</dbReference>
<dbReference type="PANTHER" id="PTHR22912">
    <property type="entry name" value="DISULFIDE OXIDOREDUCTASE"/>
    <property type="match status" value="1"/>
</dbReference>
<dbReference type="PANTHER" id="PTHR22912:SF93">
    <property type="entry name" value="SOLUBLE PYRIDINE NUCLEOTIDE TRANSHYDROGENASE"/>
    <property type="match status" value="1"/>
</dbReference>
<dbReference type="Pfam" id="PF07992">
    <property type="entry name" value="Pyr_redox_2"/>
    <property type="match status" value="1"/>
</dbReference>
<dbReference type="Pfam" id="PF02852">
    <property type="entry name" value="Pyr_redox_dim"/>
    <property type="match status" value="1"/>
</dbReference>
<dbReference type="PIRSF" id="PIRSF000350">
    <property type="entry name" value="Mercury_reductase_MerA"/>
    <property type="match status" value="1"/>
</dbReference>
<dbReference type="PRINTS" id="PR00368">
    <property type="entry name" value="FADPNR"/>
</dbReference>
<dbReference type="PRINTS" id="PR00411">
    <property type="entry name" value="PNDRDTASEI"/>
</dbReference>
<dbReference type="SUPFAM" id="SSF51905">
    <property type="entry name" value="FAD/NAD(P)-binding domain"/>
    <property type="match status" value="1"/>
</dbReference>
<dbReference type="SUPFAM" id="SSF55424">
    <property type="entry name" value="FAD/NAD-linked reductases, dimerisation (C-terminal) domain"/>
    <property type="match status" value="1"/>
</dbReference>
<feature type="chain" id="PRO_1000100864" description="Soluble pyridine nucleotide transhydrogenase">
    <location>
        <begin position="1"/>
        <end position="466"/>
    </location>
</feature>
<feature type="binding site" evidence="1">
    <location>
        <begin position="36"/>
        <end position="45"/>
    </location>
    <ligand>
        <name>FAD</name>
        <dbReference type="ChEBI" id="CHEBI:57692"/>
    </ligand>
</feature>
<reference key="1">
    <citation type="journal article" date="2010" name="J. Bacteriol.">
        <title>Genome sequence of the deep-rooted Yersinia pestis strain Angola reveals new insights into the evolution and pangenome of the plague bacterium.</title>
        <authorList>
            <person name="Eppinger M."/>
            <person name="Worsham P.L."/>
            <person name="Nikolich M.P."/>
            <person name="Riley D.R."/>
            <person name="Sebastian Y."/>
            <person name="Mou S."/>
            <person name="Achtman M."/>
            <person name="Lindler L.E."/>
            <person name="Ravel J."/>
        </authorList>
    </citation>
    <scope>NUCLEOTIDE SEQUENCE [LARGE SCALE GENOMIC DNA]</scope>
    <source>
        <strain>Angola</strain>
    </source>
</reference>
<organism>
    <name type="scientific">Yersinia pestis bv. Antiqua (strain Angola)</name>
    <dbReference type="NCBI Taxonomy" id="349746"/>
    <lineage>
        <taxon>Bacteria</taxon>
        <taxon>Pseudomonadati</taxon>
        <taxon>Pseudomonadota</taxon>
        <taxon>Gammaproteobacteria</taxon>
        <taxon>Enterobacterales</taxon>
        <taxon>Yersiniaceae</taxon>
        <taxon>Yersinia</taxon>
    </lineage>
</organism>
<evidence type="ECO:0000255" key="1">
    <source>
        <dbReference type="HAMAP-Rule" id="MF_00247"/>
    </source>
</evidence>
<comment type="function">
    <text evidence="1">Conversion of NADPH, generated by peripheral catabolic pathways, to NADH, which can enter the respiratory chain for energy generation.</text>
</comment>
<comment type="catalytic activity">
    <reaction evidence="1">
        <text>NAD(+) + NADPH = NADH + NADP(+)</text>
        <dbReference type="Rhea" id="RHEA:11692"/>
        <dbReference type="ChEBI" id="CHEBI:57540"/>
        <dbReference type="ChEBI" id="CHEBI:57783"/>
        <dbReference type="ChEBI" id="CHEBI:57945"/>
        <dbReference type="ChEBI" id="CHEBI:58349"/>
        <dbReference type="EC" id="1.6.1.1"/>
    </reaction>
</comment>
<comment type="cofactor">
    <cofactor evidence="1">
        <name>FAD</name>
        <dbReference type="ChEBI" id="CHEBI:57692"/>
    </cofactor>
    <text evidence="1">Binds 1 FAD per subunit.</text>
</comment>
<comment type="subcellular location">
    <subcellularLocation>
        <location evidence="1">Cytoplasm</location>
    </subcellularLocation>
</comment>
<comment type="similarity">
    <text evidence="1">Belongs to the class-I pyridine nucleotide-disulfide oxidoreductase family.</text>
</comment>
<keyword id="KW-0963">Cytoplasm</keyword>
<keyword id="KW-0274">FAD</keyword>
<keyword id="KW-0285">Flavoprotein</keyword>
<keyword id="KW-0520">NAD</keyword>
<keyword id="KW-0521">NADP</keyword>
<keyword id="KW-0560">Oxidoreductase</keyword>
<proteinExistence type="inferred from homology"/>